<protein>
    <recommendedName>
        <fullName evidence="1">UPF0299 membrane protein VC0395_A0854/VC395_1352</fullName>
    </recommendedName>
</protein>
<feature type="chain" id="PRO_1000073053" description="UPF0299 membrane protein VC0395_A0854/VC395_1352">
    <location>
        <begin position="1"/>
        <end position="129"/>
    </location>
</feature>
<feature type="transmembrane region" description="Helical" evidence="1">
    <location>
        <begin position="10"/>
        <end position="30"/>
    </location>
</feature>
<feature type="transmembrane region" description="Helical" evidence="1">
    <location>
        <begin position="33"/>
        <end position="53"/>
    </location>
</feature>
<feature type="transmembrane region" description="Helical" evidence="1">
    <location>
        <begin position="73"/>
        <end position="93"/>
    </location>
</feature>
<feature type="transmembrane region" description="Helical" evidence="1">
    <location>
        <begin position="97"/>
        <end position="117"/>
    </location>
</feature>
<accession>A5F1V9</accession>
<accession>C3LZZ4</accession>
<name>Y2054_VIBC3</name>
<gene>
    <name type="ordered locus">VC0395_A0854</name>
    <name type="ordered locus">VC395_1352</name>
</gene>
<organism>
    <name type="scientific">Vibrio cholerae serotype O1 (strain ATCC 39541 / Classical Ogawa 395 / O395)</name>
    <dbReference type="NCBI Taxonomy" id="345073"/>
    <lineage>
        <taxon>Bacteria</taxon>
        <taxon>Pseudomonadati</taxon>
        <taxon>Pseudomonadota</taxon>
        <taxon>Gammaproteobacteria</taxon>
        <taxon>Vibrionales</taxon>
        <taxon>Vibrionaceae</taxon>
        <taxon>Vibrio</taxon>
    </lineage>
</organism>
<evidence type="ECO:0000255" key="1">
    <source>
        <dbReference type="HAMAP-Rule" id="MF_01144"/>
    </source>
</evidence>
<keyword id="KW-0997">Cell inner membrane</keyword>
<keyword id="KW-1003">Cell membrane</keyword>
<keyword id="KW-0472">Membrane</keyword>
<keyword id="KW-0812">Transmembrane</keyword>
<keyword id="KW-1133">Transmembrane helix</keyword>
<reference key="1">
    <citation type="submission" date="2007-03" db="EMBL/GenBank/DDBJ databases">
        <authorList>
            <person name="Heidelberg J."/>
        </authorList>
    </citation>
    <scope>NUCLEOTIDE SEQUENCE [LARGE SCALE GENOMIC DNA]</scope>
    <source>
        <strain>ATCC 39541 / Classical Ogawa 395 / O395</strain>
    </source>
</reference>
<reference key="2">
    <citation type="journal article" date="2008" name="PLoS ONE">
        <title>A recalibrated molecular clock and independent origins for the cholera pandemic clones.</title>
        <authorList>
            <person name="Feng L."/>
            <person name="Reeves P.R."/>
            <person name="Lan R."/>
            <person name="Ren Y."/>
            <person name="Gao C."/>
            <person name="Zhou Z."/>
            <person name="Ren Y."/>
            <person name="Cheng J."/>
            <person name="Wang W."/>
            <person name="Wang J."/>
            <person name="Qian W."/>
            <person name="Li D."/>
            <person name="Wang L."/>
        </authorList>
    </citation>
    <scope>NUCLEOTIDE SEQUENCE [LARGE SCALE GENOMIC DNA]</scope>
    <source>
        <strain>ATCC 39541 / Classical Ogawa 395 / O395</strain>
    </source>
</reference>
<dbReference type="EMBL" id="CP000627">
    <property type="protein sequence ID" value="ABQ21441.1"/>
    <property type="molecule type" value="Genomic_DNA"/>
</dbReference>
<dbReference type="EMBL" id="CP001235">
    <property type="protein sequence ID" value="ACP09360.1"/>
    <property type="molecule type" value="Genomic_DNA"/>
</dbReference>
<dbReference type="SMR" id="A5F1V9"/>
<dbReference type="KEGG" id="vco:VC0395_A0854"/>
<dbReference type="KEGG" id="vcr:VC395_1352"/>
<dbReference type="PATRIC" id="fig|345073.21.peg.1313"/>
<dbReference type="eggNOG" id="COG1380">
    <property type="taxonomic scope" value="Bacteria"/>
</dbReference>
<dbReference type="HOGENOM" id="CLU_113736_1_1_6"/>
<dbReference type="OrthoDB" id="385012at2"/>
<dbReference type="Proteomes" id="UP000000249">
    <property type="component" value="Chromosome 2"/>
</dbReference>
<dbReference type="GO" id="GO:0005886">
    <property type="term" value="C:plasma membrane"/>
    <property type="evidence" value="ECO:0007669"/>
    <property type="project" value="UniProtKB-SubCell"/>
</dbReference>
<dbReference type="HAMAP" id="MF_01144">
    <property type="entry name" value="UPF0299"/>
    <property type="match status" value="1"/>
</dbReference>
<dbReference type="InterPro" id="IPR005538">
    <property type="entry name" value="LrgA/CidA"/>
</dbReference>
<dbReference type="InterPro" id="IPR022957">
    <property type="entry name" value="Uncharacterised_UPF0299"/>
</dbReference>
<dbReference type="PANTHER" id="PTHR33931">
    <property type="entry name" value="HOLIN-LIKE PROTEIN CIDA-RELATED"/>
    <property type="match status" value="1"/>
</dbReference>
<dbReference type="PANTHER" id="PTHR33931:SF5">
    <property type="entry name" value="UPF0299 MEMBRANE PROTEIN YOHJ"/>
    <property type="match status" value="1"/>
</dbReference>
<dbReference type="Pfam" id="PF03788">
    <property type="entry name" value="LrgA"/>
    <property type="match status" value="1"/>
</dbReference>
<comment type="subcellular location">
    <subcellularLocation>
        <location evidence="1">Cell inner membrane</location>
        <topology evidence="1">Multi-pass membrane protein</topology>
    </subcellularLocation>
</comment>
<comment type="similarity">
    <text evidence="1">Belongs to the UPF0299 family.</text>
</comment>
<proteinExistence type="inferred from homology"/>
<sequence length="129" mass="13855">MLILLMIKKIAQYCVSMGLIFLCLLAGINLQTWLGIAIPGSIIGLLILFGLMASGLVPVEWVKPSATLFIRYMILLFVPISVGLMVHFDTLLANLAPILASAIGGTLIVMVTLGLILDRMLKKGKKSCG</sequence>